<proteinExistence type="evidence at protein level"/>
<organism>
    <name type="scientific">Rattus norvegicus</name>
    <name type="common">Rat</name>
    <dbReference type="NCBI Taxonomy" id="10116"/>
    <lineage>
        <taxon>Eukaryota</taxon>
        <taxon>Metazoa</taxon>
        <taxon>Chordata</taxon>
        <taxon>Craniata</taxon>
        <taxon>Vertebrata</taxon>
        <taxon>Euteleostomi</taxon>
        <taxon>Mammalia</taxon>
        <taxon>Eutheria</taxon>
        <taxon>Euarchontoglires</taxon>
        <taxon>Glires</taxon>
        <taxon>Rodentia</taxon>
        <taxon>Myomorpha</taxon>
        <taxon>Muroidea</taxon>
        <taxon>Muridae</taxon>
        <taxon>Murinae</taxon>
        <taxon>Rattus</taxon>
    </lineage>
</organism>
<feature type="chain" id="PRO_0000080473" description="Cyclin-H">
    <location>
        <begin position="1"/>
        <end position="323"/>
    </location>
</feature>
<feature type="region of interest" description="Disordered" evidence="2">
    <location>
        <begin position="296"/>
        <end position="323"/>
    </location>
</feature>
<feature type="compositionally biased region" description="Acidic residues" evidence="2">
    <location>
        <begin position="310"/>
        <end position="323"/>
    </location>
</feature>
<feature type="modified residue" description="Phosphoserine; by CDK8" evidence="1">
    <location>
        <position position="5"/>
    </location>
</feature>
<feature type="modified residue" description="Phosphoserine" evidence="1">
    <location>
        <position position="132"/>
    </location>
</feature>
<feature type="modified residue" description="Phosphoserine; by CDK8" evidence="1">
    <location>
        <position position="304"/>
    </location>
</feature>
<feature type="modified residue" description="Phosphothreonine" evidence="4">
    <location>
        <position position="315"/>
    </location>
</feature>
<feature type="sequence conflict" description="In Ref. 2; CAC37406." evidence="3" ref="2">
    <original>FV</original>
    <variation>KE</variation>
    <location>
        <begin position="125"/>
        <end position="126"/>
    </location>
</feature>
<feature type="sequence conflict" description="In Ref. 2; CAC37406." evidence="3" ref="2">
    <original>S</original>
    <variation>R</variation>
    <location>
        <position position="220"/>
    </location>
</feature>
<feature type="sequence conflict" description="In Ref. 1; AAD46521." evidence="3" ref="1">
    <original>ML</original>
    <variation>SR</variation>
    <location>
        <begin position="237"/>
        <end position="238"/>
    </location>
</feature>
<comment type="function">
    <text>Regulates CDK7, the catalytic subunit of the CDK-activating kinase (CAK) enzymatic complex. CAK activates the cyclin-associated kinases CDK1, CDK2, CDK4 and CDK6 by threonine phosphorylation. CAK complexed to the core-TFIIH basal transcription factor activates RNA polymerase II by serine phosphorylation of the repetitive C-terminal domain (CTD) of its large subunit (POLR2A), allowing its escape from the promoter and elongation of the transcripts. Involved in cell cycle control and in RNA transcription by RNA polymerase II. Its expression and activity are constant throughout the cell cycle.</text>
</comment>
<comment type="subunit">
    <text>Associates primarily with CDK7 and MAT1 to form the CAK complex. CAK can further associate with the core-TFIIH to form the TFIIH basal transcription factor.</text>
</comment>
<comment type="subcellular location">
    <subcellularLocation>
        <location>Nucleus</location>
    </subcellularLocation>
</comment>
<comment type="similarity">
    <text evidence="3">Belongs to the cyclin family. Cyclin C subfamily.</text>
</comment>
<keyword id="KW-0131">Cell cycle</keyword>
<keyword id="KW-0195">Cyclin</keyword>
<keyword id="KW-0539">Nucleus</keyword>
<keyword id="KW-0597">Phosphoprotein</keyword>
<keyword id="KW-1185">Reference proteome</keyword>
<keyword id="KW-0804">Transcription</keyword>
<keyword id="KW-0805">Transcription regulation</keyword>
<gene>
    <name type="primary">Ccnh</name>
</gene>
<reference key="1">
    <citation type="journal article" date="1999" name="J. Neurochem.">
        <title>Molecular cloning of a cell cycle regulation gene cyclin H from ischemic rat brain: expression in neurons after global cerebral ischemia.</title>
        <authorList>
            <person name="Jin K."/>
            <person name="Nagayama T."/>
            <person name="Chen J."/>
            <person name="Stetler A.R."/>
            <person name="Kawaguchi K."/>
            <person name="Simon R.P."/>
            <person name="Graham S.H."/>
        </authorList>
    </citation>
    <scope>NUCLEOTIDE SEQUENCE [MRNA]</scope>
    <source>
        <tissue>Hippocampus</tissue>
    </source>
</reference>
<reference key="2">
    <citation type="journal article" date="2001" name="Mamm. Genome">
        <title>Analysis of candidate genes included in the mammary cancer susceptibility 1 (Mcs1) region.</title>
        <authorList>
            <person name="Laes J.-F."/>
            <person name="Quan X."/>
            <person name="Ravoet M."/>
            <person name="van Vooren P."/>
            <person name="van Reeth T."/>
            <person name="Szpirer J."/>
            <person name="Szpirer C."/>
        </authorList>
    </citation>
    <scope>NUCLEOTIDE SEQUENCE [MRNA]</scope>
    <source>
        <strain>Sprague-Dawley</strain>
        <tissue>Brain</tissue>
    </source>
</reference>
<reference key="3">
    <citation type="journal article" date="2004" name="Genome Res.">
        <title>The status, quality, and expansion of the NIH full-length cDNA project: the Mammalian Gene Collection (MGC).</title>
        <authorList>
            <consortium name="The MGC Project Team"/>
        </authorList>
    </citation>
    <scope>NUCLEOTIDE SEQUENCE [LARGE SCALE MRNA]</scope>
    <source>
        <tissue>Pituitary</tissue>
    </source>
</reference>
<reference key="4">
    <citation type="journal article" date="2012" name="Nat. Commun.">
        <title>Quantitative maps of protein phosphorylation sites across 14 different rat organs and tissues.</title>
        <authorList>
            <person name="Lundby A."/>
            <person name="Secher A."/>
            <person name="Lage K."/>
            <person name="Nordsborg N.B."/>
            <person name="Dmytriyev A."/>
            <person name="Lundby C."/>
            <person name="Olsen J.V."/>
        </authorList>
    </citation>
    <scope>PHOSPHORYLATION [LARGE SCALE ANALYSIS] AT THR-315</scope>
    <scope>IDENTIFICATION BY MASS SPECTROMETRY [LARGE SCALE ANALYSIS]</scope>
</reference>
<dbReference type="EMBL" id="AF154914">
    <property type="protein sequence ID" value="AAD46521.1"/>
    <property type="molecule type" value="mRNA"/>
</dbReference>
<dbReference type="EMBL" id="AJ276495">
    <property type="protein sequence ID" value="CAC37406.1"/>
    <property type="molecule type" value="mRNA"/>
</dbReference>
<dbReference type="EMBL" id="BC059109">
    <property type="protein sequence ID" value="AAH59109.1"/>
    <property type="molecule type" value="mRNA"/>
</dbReference>
<dbReference type="RefSeq" id="NP_443213.2">
    <property type="nucleotide sequence ID" value="NM_052981.2"/>
</dbReference>
<dbReference type="SMR" id="Q9R1A0"/>
<dbReference type="FunCoup" id="Q9R1A0">
    <property type="interactions" value="2534"/>
</dbReference>
<dbReference type="STRING" id="10116.ENSRNOP00000039039"/>
<dbReference type="iPTMnet" id="Q9R1A0"/>
<dbReference type="PhosphoSitePlus" id="Q9R1A0"/>
<dbReference type="PaxDb" id="10116-ENSRNOP00000039039"/>
<dbReference type="Ensembl" id="ENSRNOT00000049423.2">
    <property type="protein sequence ID" value="ENSRNOP00000039039.1"/>
    <property type="gene ID" value="ENSRNOG00000031656.2"/>
</dbReference>
<dbReference type="GeneID" id="84389"/>
<dbReference type="KEGG" id="rno:84389"/>
<dbReference type="UCSC" id="RGD:69419">
    <property type="organism name" value="rat"/>
</dbReference>
<dbReference type="AGR" id="RGD:69419"/>
<dbReference type="CTD" id="902"/>
<dbReference type="RGD" id="69419">
    <property type="gene designation" value="Ccnh"/>
</dbReference>
<dbReference type="eggNOG" id="KOG2496">
    <property type="taxonomic scope" value="Eukaryota"/>
</dbReference>
<dbReference type="GeneTree" id="ENSGT00390000008634"/>
<dbReference type="HOGENOM" id="CLU_022620_0_0_1"/>
<dbReference type="InParanoid" id="Q9R1A0"/>
<dbReference type="PhylomeDB" id="Q9R1A0"/>
<dbReference type="TreeFam" id="TF101008"/>
<dbReference type="Reactome" id="R-RNO-112382">
    <property type="pathway name" value="Formation of RNA Pol II elongation complex"/>
</dbReference>
<dbReference type="Reactome" id="R-RNO-113418">
    <property type="pathway name" value="Formation of the Early Elongation Complex"/>
</dbReference>
<dbReference type="Reactome" id="R-RNO-5696395">
    <property type="pathway name" value="Formation of Incision Complex in GG-NER"/>
</dbReference>
<dbReference type="Reactome" id="R-RNO-674695">
    <property type="pathway name" value="RNA Polymerase II Pre-transcription Events"/>
</dbReference>
<dbReference type="Reactome" id="R-RNO-6781823">
    <property type="pathway name" value="Formation of TC-NER Pre-Incision Complex"/>
</dbReference>
<dbReference type="Reactome" id="R-RNO-6782135">
    <property type="pathway name" value="Dual incision in TC-NER"/>
</dbReference>
<dbReference type="Reactome" id="R-RNO-6782210">
    <property type="pathway name" value="Gap-filling DNA repair synthesis and ligation in TC-NER"/>
</dbReference>
<dbReference type="Reactome" id="R-RNO-6796648">
    <property type="pathway name" value="TP53 Regulates Transcription of DNA Repair Genes"/>
</dbReference>
<dbReference type="Reactome" id="R-RNO-69202">
    <property type="pathway name" value="Cyclin E associated events during G1/S transition"/>
</dbReference>
<dbReference type="Reactome" id="R-RNO-69231">
    <property type="pathway name" value="Cyclin D associated events in G1"/>
</dbReference>
<dbReference type="Reactome" id="R-RNO-69273">
    <property type="pathway name" value="Cyclin A/B1/B2 associated events during G2/M transition"/>
</dbReference>
<dbReference type="Reactome" id="R-RNO-69656">
    <property type="pathway name" value="Cyclin A:Cdk2-associated events at S phase entry"/>
</dbReference>
<dbReference type="Reactome" id="R-RNO-72086">
    <property type="pathway name" value="mRNA Capping"/>
</dbReference>
<dbReference type="Reactome" id="R-RNO-73762">
    <property type="pathway name" value="RNA Polymerase I Transcription Initiation"/>
</dbReference>
<dbReference type="Reactome" id="R-RNO-73772">
    <property type="pathway name" value="RNA Polymerase I Promoter Escape"/>
</dbReference>
<dbReference type="Reactome" id="R-RNO-73776">
    <property type="pathway name" value="RNA Polymerase II Promoter Escape"/>
</dbReference>
<dbReference type="Reactome" id="R-RNO-73779">
    <property type="pathway name" value="RNA Polymerase II Transcription Pre-Initiation And Promoter Opening"/>
</dbReference>
<dbReference type="Reactome" id="R-RNO-73863">
    <property type="pathway name" value="RNA Polymerase I Transcription Termination"/>
</dbReference>
<dbReference type="Reactome" id="R-RNO-75953">
    <property type="pathway name" value="RNA Polymerase II Transcription Initiation"/>
</dbReference>
<dbReference type="Reactome" id="R-RNO-75955">
    <property type="pathway name" value="RNA Polymerase II Transcription Elongation"/>
</dbReference>
<dbReference type="Reactome" id="R-RNO-76042">
    <property type="pathway name" value="RNA Polymerase II Transcription Initiation And Promoter Clearance"/>
</dbReference>
<dbReference type="Reactome" id="R-RNO-77075">
    <property type="pathway name" value="RNA Pol II CTD phosphorylation and interaction with CE"/>
</dbReference>
<dbReference type="Reactome" id="R-RNO-8939236">
    <property type="pathway name" value="RUNX1 regulates transcription of genes involved in differentiation of HSCs"/>
</dbReference>
<dbReference type="PRO" id="PR:Q9R1A0"/>
<dbReference type="Proteomes" id="UP000002494">
    <property type="component" value="Chromosome 2"/>
</dbReference>
<dbReference type="Bgee" id="ENSRNOG00000031656">
    <property type="expression patterns" value="Expressed in heart and 20 other cell types or tissues"/>
</dbReference>
<dbReference type="GO" id="GO:0070516">
    <property type="term" value="C:CAK-ERCC2 complex"/>
    <property type="evidence" value="ECO:0000266"/>
    <property type="project" value="RGD"/>
</dbReference>
<dbReference type="GO" id="GO:0000307">
    <property type="term" value="C:cyclin-dependent protein kinase holoenzyme complex"/>
    <property type="evidence" value="ECO:0000266"/>
    <property type="project" value="RGD"/>
</dbReference>
<dbReference type="GO" id="GO:0001673">
    <property type="term" value="C:male germ cell nucleus"/>
    <property type="evidence" value="ECO:0000266"/>
    <property type="project" value="RGD"/>
</dbReference>
<dbReference type="GO" id="GO:0005634">
    <property type="term" value="C:nucleus"/>
    <property type="evidence" value="ECO:0000318"/>
    <property type="project" value="GO_Central"/>
</dbReference>
<dbReference type="GO" id="GO:0000439">
    <property type="term" value="C:transcription factor TFIIH core complex"/>
    <property type="evidence" value="ECO:0000266"/>
    <property type="project" value="RGD"/>
</dbReference>
<dbReference type="GO" id="GO:0005675">
    <property type="term" value="C:transcription factor TFIIH holo complex"/>
    <property type="evidence" value="ECO:0000250"/>
    <property type="project" value="UniProtKB"/>
</dbReference>
<dbReference type="GO" id="GO:0070985">
    <property type="term" value="C:transcription factor TFIIK complex"/>
    <property type="evidence" value="ECO:0000266"/>
    <property type="project" value="RGD"/>
</dbReference>
<dbReference type="GO" id="GO:0016538">
    <property type="term" value="F:cyclin-dependent protein serine/threonine kinase regulator activity"/>
    <property type="evidence" value="ECO:0000318"/>
    <property type="project" value="GO_Central"/>
</dbReference>
<dbReference type="GO" id="GO:0016301">
    <property type="term" value="F:kinase activity"/>
    <property type="evidence" value="ECO:0000266"/>
    <property type="project" value="RGD"/>
</dbReference>
<dbReference type="GO" id="GO:0050821">
    <property type="term" value="P:protein stabilization"/>
    <property type="evidence" value="ECO:0000266"/>
    <property type="project" value="RGD"/>
</dbReference>
<dbReference type="GO" id="GO:2000045">
    <property type="term" value="P:regulation of G1/S transition of mitotic cell cycle"/>
    <property type="evidence" value="ECO:0000266"/>
    <property type="project" value="RGD"/>
</dbReference>
<dbReference type="GO" id="GO:0006357">
    <property type="term" value="P:regulation of transcription by RNA polymerase II"/>
    <property type="evidence" value="ECO:0000250"/>
    <property type="project" value="UniProtKB"/>
</dbReference>
<dbReference type="GO" id="GO:0006367">
    <property type="term" value="P:transcription initiation at RNA polymerase II promoter"/>
    <property type="evidence" value="ECO:0000266"/>
    <property type="project" value="RGD"/>
</dbReference>
<dbReference type="CDD" id="cd20524">
    <property type="entry name" value="CYCLIN_CCNH_rpt1"/>
    <property type="match status" value="1"/>
</dbReference>
<dbReference type="CDD" id="cd20525">
    <property type="entry name" value="CYCLIN_CCNH_rpt2"/>
    <property type="match status" value="1"/>
</dbReference>
<dbReference type="FunFam" id="1.10.472.10:FF:000029">
    <property type="entry name" value="Cyclin h"/>
    <property type="match status" value="1"/>
</dbReference>
<dbReference type="FunFam" id="1.10.472.10:FF:000044">
    <property type="entry name" value="cyclin-H isoform X1"/>
    <property type="match status" value="1"/>
</dbReference>
<dbReference type="Gene3D" id="1.10.472.10">
    <property type="entry name" value="Cyclin-like"/>
    <property type="match status" value="2"/>
</dbReference>
<dbReference type="InterPro" id="IPR013763">
    <property type="entry name" value="Cyclin-like_dom"/>
</dbReference>
<dbReference type="InterPro" id="IPR036915">
    <property type="entry name" value="Cyclin-like_sf"/>
</dbReference>
<dbReference type="InterPro" id="IPR043198">
    <property type="entry name" value="Cyclin/Ssn8"/>
</dbReference>
<dbReference type="InterPro" id="IPR031658">
    <property type="entry name" value="Cyclin_C_2"/>
</dbReference>
<dbReference type="InterPro" id="IPR006671">
    <property type="entry name" value="Cyclin_N"/>
</dbReference>
<dbReference type="InterPro" id="IPR027081">
    <property type="entry name" value="CyclinH/Ccl1"/>
</dbReference>
<dbReference type="NCBIfam" id="TIGR00569">
    <property type="entry name" value="ccl1"/>
    <property type="match status" value="1"/>
</dbReference>
<dbReference type="PANTHER" id="PTHR10026">
    <property type="entry name" value="CYCLIN"/>
    <property type="match status" value="1"/>
</dbReference>
<dbReference type="Pfam" id="PF16899">
    <property type="entry name" value="Cyclin_C_2"/>
    <property type="match status" value="1"/>
</dbReference>
<dbReference type="Pfam" id="PF00134">
    <property type="entry name" value="Cyclin_N"/>
    <property type="match status" value="1"/>
</dbReference>
<dbReference type="SMART" id="SM00385">
    <property type="entry name" value="CYCLIN"/>
    <property type="match status" value="1"/>
</dbReference>
<dbReference type="SUPFAM" id="SSF47954">
    <property type="entry name" value="Cyclin-like"/>
    <property type="match status" value="2"/>
</dbReference>
<protein>
    <recommendedName>
        <fullName>Cyclin-H</fullName>
    </recommendedName>
</protein>
<accession>Q9R1A0</accession>
<accession>Q99JE5</accession>
<name>CCNH_RAT</name>
<evidence type="ECO:0000250" key="1">
    <source>
        <dbReference type="UniProtKB" id="P51946"/>
    </source>
</evidence>
<evidence type="ECO:0000256" key="2">
    <source>
        <dbReference type="SAM" id="MobiDB-lite"/>
    </source>
</evidence>
<evidence type="ECO:0000305" key="3"/>
<evidence type="ECO:0007744" key="4">
    <source>
    </source>
</evidence>
<sequence>MYHNSSQKRHWTFASEEQLARLRADANRKFKCKAVANGKVLPNDPLFLEPHEEMTLCKYYEKRLLEFCSVFKPAMPRSVVGTACMYFKRFYLNNSVMEYHPRIIMLTCAFLACKVDEFNVSSPQFVGNLRESPLGQEKALEQILEYELLLIQQLNFHLIVHNPYRPFEGFLIDIKTRYPMLENPEILRKTADDFLSRIALTDAYLLYTPSQIALTAILSSASRAGITMESYLSESLMLKENRTCLSQLLDIMKSMRNLVKKYEPPRSEEVAILKQKLERCHSSDLALNMVTKKRKGYEDDDYVSKKPKQEEEEWTDDDLVDAL</sequence>